<name>U512I_DICDI</name>
<feature type="chain" id="PRO_0000317347" description="UPF0512 protein I">
    <location>
        <begin position="1"/>
        <end position="83"/>
    </location>
</feature>
<protein>
    <recommendedName>
        <fullName>UPF0512 protein I</fullName>
    </recommendedName>
</protein>
<keyword id="KW-1185">Reference proteome</keyword>
<comment type="similarity">
    <text evidence="1">Belongs to the UPF0512 family.</text>
</comment>
<evidence type="ECO:0000305" key="1"/>
<organism>
    <name type="scientific">Dictyostelium discoideum</name>
    <name type="common">Social amoeba</name>
    <dbReference type="NCBI Taxonomy" id="44689"/>
    <lineage>
        <taxon>Eukaryota</taxon>
        <taxon>Amoebozoa</taxon>
        <taxon>Evosea</taxon>
        <taxon>Eumycetozoa</taxon>
        <taxon>Dictyostelia</taxon>
        <taxon>Dictyosteliales</taxon>
        <taxon>Dictyosteliaceae</taxon>
        <taxon>Dictyostelium</taxon>
    </lineage>
</organism>
<gene>
    <name type="ORF">DDB_G0293316</name>
</gene>
<sequence length="83" mass="8879">MTIFNSISSISNPTRTALSSINTYNYNGSSVNDNSTAYFDNDFGGWGGLGDFGNGNGCGGGSSNVNVINLDIDFGRRRHRRCC</sequence>
<proteinExistence type="inferred from homology"/>
<accession>Q54BZ7</accession>
<reference key="1">
    <citation type="journal article" date="2005" name="Nature">
        <title>The genome of the social amoeba Dictyostelium discoideum.</title>
        <authorList>
            <person name="Eichinger L."/>
            <person name="Pachebat J.A."/>
            <person name="Gloeckner G."/>
            <person name="Rajandream M.A."/>
            <person name="Sucgang R."/>
            <person name="Berriman M."/>
            <person name="Song J."/>
            <person name="Olsen R."/>
            <person name="Szafranski K."/>
            <person name="Xu Q."/>
            <person name="Tunggal B."/>
            <person name="Kummerfeld S."/>
            <person name="Madera M."/>
            <person name="Konfortov B.A."/>
            <person name="Rivero F."/>
            <person name="Bankier A.T."/>
            <person name="Lehmann R."/>
            <person name="Hamlin N."/>
            <person name="Davies R."/>
            <person name="Gaudet P."/>
            <person name="Fey P."/>
            <person name="Pilcher K."/>
            <person name="Chen G."/>
            <person name="Saunders D."/>
            <person name="Sodergren E.J."/>
            <person name="Davis P."/>
            <person name="Kerhornou A."/>
            <person name="Nie X."/>
            <person name="Hall N."/>
            <person name="Anjard C."/>
            <person name="Hemphill L."/>
            <person name="Bason N."/>
            <person name="Farbrother P."/>
            <person name="Desany B."/>
            <person name="Just E."/>
            <person name="Morio T."/>
            <person name="Rost R."/>
            <person name="Churcher C.M."/>
            <person name="Cooper J."/>
            <person name="Haydock S."/>
            <person name="van Driessche N."/>
            <person name="Cronin A."/>
            <person name="Goodhead I."/>
            <person name="Muzny D.M."/>
            <person name="Mourier T."/>
            <person name="Pain A."/>
            <person name="Lu M."/>
            <person name="Harper D."/>
            <person name="Lindsay R."/>
            <person name="Hauser H."/>
            <person name="James K.D."/>
            <person name="Quiles M."/>
            <person name="Madan Babu M."/>
            <person name="Saito T."/>
            <person name="Buchrieser C."/>
            <person name="Wardroper A."/>
            <person name="Felder M."/>
            <person name="Thangavelu M."/>
            <person name="Johnson D."/>
            <person name="Knights A."/>
            <person name="Loulseged H."/>
            <person name="Mungall K.L."/>
            <person name="Oliver K."/>
            <person name="Price C."/>
            <person name="Quail M.A."/>
            <person name="Urushihara H."/>
            <person name="Hernandez J."/>
            <person name="Rabbinowitsch E."/>
            <person name="Steffen D."/>
            <person name="Sanders M."/>
            <person name="Ma J."/>
            <person name="Kohara Y."/>
            <person name="Sharp S."/>
            <person name="Simmonds M.N."/>
            <person name="Spiegler S."/>
            <person name="Tivey A."/>
            <person name="Sugano S."/>
            <person name="White B."/>
            <person name="Walker D."/>
            <person name="Woodward J.R."/>
            <person name="Winckler T."/>
            <person name="Tanaka Y."/>
            <person name="Shaulsky G."/>
            <person name="Schleicher M."/>
            <person name="Weinstock G.M."/>
            <person name="Rosenthal A."/>
            <person name="Cox E.C."/>
            <person name="Chisholm R.L."/>
            <person name="Gibbs R.A."/>
            <person name="Loomis W.F."/>
            <person name="Platzer M."/>
            <person name="Kay R.R."/>
            <person name="Williams J.G."/>
            <person name="Dear P.H."/>
            <person name="Noegel A.A."/>
            <person name="Barrell B.G."/>
            <person name="Kuspa A."/>
        </authorList>
    </citation>
    <scope>NUCLEOTIDE SEQUENCE [LARGE SCALE GENOMIC DNA]</scope>
    <source>
        <strain>AX4</strain>
    </source>
</reference>
<dbReference type="EMBL" id="AAFI02000201">
    <property type="protein sequence ID" value="EAL60782.1"/>
    <property type="molecule type" value="Genomic_DNA"/>
</dbReference>
<dbReference type="RefSeq" id="XP_629194.1">
    <property type="nucleotide sequence ID" value="XM_629192.1"/>
</dbReference>
<dbReference type="FunCoup" id="Q54BZ7">
    <property type="interactions" value="640"/>
</dbReference>
<dbReference type="PaxDb" id="44689-DDB0266569"/>
<dbReference type="EnsemblProtists" id="EAL60782">
    <property type="protein sequence ID" value="EAL60782"/>
    <property type="gene ID" value="DDB_G0293316"/>
</dbReference>
<dbReference type="GeneID" id="8629153"/>
<dbReference type="KEGG" id="ddi:DDB_G0293316"/>
<dbReference type="dictyBase" id="DDB_G0293316"/>
<dbReference type="VEuPathDB" id="AmoebaDB:DDB_G0293316"/>
<dbReference type="HOGENOM" id="CLU_194865_0_0_1"/>
<dbReference type="InParanoid" id="Q54BZ7"/>
<dbReference type="PhylomeDB" id="Q54BZ7"/>
<dbReference type="PRO" id="PR:Q54BZ7"/>
<dbReference type="Proteomes" id="UP000002195">
    <property type="component" value="Chromosome 6"/>
</dbReference>